<sequence length="93" mass="10674">MSRSIKKGPFIDDHLMKKTLKAKEGKDNRPIKTWSRRSTILPEMIGFTYNVHNGRVFVPVYITENHVGYKLGEFAPTRTFKGHKGSVQKKIGK</sequence>
<dbReference type="EMBL" id="CP001173">
    <property type="protein sequence ID" value="ACI28012.1"/>
    <property type="molecule type" value="Genomic_DNA"/>
</dbReference>
<dbReference type="RefSeq" id="WP_000091385.1">
    <property type="nucleotide sequence ID" value="NC_011333.1"/>
</dbReference>
<dbReference type="SMR" id="B5Z8W3"/>
<dbReference type="GeneID" id="93237554"/>
<dbReference type="KEGG" id="hpg:HPG27_1264"/>
<dbReference type="HOGENOM" id="CLU_144911_0_1_7"/>
<dbReference type="Proteomes" id="UP000001735">
    <property type="component" value="Chromosome"/>
</dbReference>
<dbReference type="GO" id="GO:0005737">
    <property type="term" value="C:cytoplasm"/>
    <property type="evidence" value="ECO:0007669"/>
    <property type="project" value="UniProtKB-ARBA"/>
</dbReference>
<dbReference type="GO" id="GO:0015935">
    <property type="term" value="C:small ribosomal subunit"/>
    <property type="evidence" value="ECO:0007669"/>
    <property type="project" value="InterPro"/>
</dbReference>
<dbReference type="GO" id="GO:0019843">
    <property type="term" value="F:rRNA binding"/>
    <property type="evidence" value="ECO:0007669"/>
    <property type="project" value="UniProtKB-UniRule"/>
</dbReference>
<dbReference type="GO" id="GO:0003735">
    <property type="term" value="F:structural constituent of ribosome"/>
    <property type="evidence" value="ECO:0007669"/>
    <property type="project" value="InterPro"/>
</dbReference>
<dbReference type="GO" id="GO:0000028">
    <property type="term" value="P:ribosomal small subunit assembly"/>
    <property type="evidence" value="ECO:0007669"/>
    <property type="project" value="TreeGrafter"/>
</dbReference>
<dbReference type="GO" id="GO:0006412">
    <property type="term" value="P:translation"/>
    <property type="evidence" value="ECO:0007669"/>
    <property type="project" value="UniProtKB-UniRule"/>
</dbReference>
<dbReference type="FunFam" id="3.30.860.10:FF:000001">
    <property type="entry name" value="30S ribosomal protein S19"/>
    <property type="match status" value="1"/>
</dbReference>
<dbReference type="Gene3D" id="3.30.860.10">
    <property type="entry name" value="30s Ribosomal Protein S19, Chain A"/>
    <property type="match status" value="1"/>
</dbReference>
<dbReference type="HAMAP" id="MF_00531">
    <property type="entry name" value="Ribosomal_uS19"/>
    <property type="match status" value="1"/>
</dbReference>
<dbReference type="InterPro" id="IPR002222">
    <property type="entry name" value="Ribosomal_uS19"/>
</dbReference>
<dbReference type="InterPro" id="IPR005732">
    <property type="entry name" value="Ribosomal_uS19_bac-type"/>
</dbReference>
<dbReference type="InterPro" id="IPR020934">
    <property type="entry name" value="Ribosomal_uS19_CS"/>
</dbReference>
<dbReference type="InterPro" id="IPR023575">
    <property type="entry name" value="Ribosomal_uS19_SF"/>
</dbReference>
<dbReference type="NCBIfam" id="TIGR01050">
    <property type="entry name" value="rpsS_bact"/>
    <property type="match status" value="1"/>
</dbReference>
<dbReference type="PANTHER" id="PTHR11880">
    <property type="entry name" value="RIBOSOMAL PROTEIN S19P FAMILY MEMBER"/>
    <property type="match status" value="1"/>
</dbReference>
<dbReference type="PANTHER" id="PTHR11880:SF8">
    <property type="entry name" value="SMALL RIBOSOMAL SUBUNIT PROTEIN US19M"/>
    <property type="match status" value="1"/>
</dbReference>
<dbReference type="Pfam" id="PF00203">
    <property type="entry name" value="Ribosomal_S19"/>
    <property type="match status" value="1"/>
</dbReference>
<dbReference type="PIRSF" id="PIRSF002144">
    <property type="entry name" value="Ribosomal_S19"/>
    <property type="match status" value="1"/>
</dbReference>
<dbReference type="PRINTS" id="PR00975">
    <property type="entry name" value="RIBOSOMALS19"/>
</dbReference>
<dbReference type="SUPFAM" id="SSF54570">
    <property type="entry name" value="Ribosomal protein S19"/>
    <property type="match status" value="1"/>
</dbReference>
<dbReference type="PROSITE" id="PS00323">
    <property type="entry name" value="RIBOSOMAL_S19"/>
    <property type="match status" value="1"/>
</dbReference>
<protein>
    <recommendedName>
        <fullName evidence="1">Small ribosomal subunit protein uS19</fullName>
    </recommendedName>
    <alternativeName>
        <fullName evidence="2">30S ribosomal protein S19</fullName>
    </alternativeName>
</protein>
<organism>
    <name type="scientific">Helicobacter pylori (strain G27)</name>
    <dbReference type="NCBI Taxonomy" id="563041"/>
    <lineage>
        <taxon>Bacteria</taxon>
        <taxon>Pseudomonadati</taxon>
        <taxon>Campylobacterota</taxon>
        <taxon>Epsilonproteobacteria</taxon>
        <taxon>Campylobacterales</taxon>
        <taxon>Helicobacteraceae</taxon>
        <taxon>Helicobacter</taxon>
    </lineage>
</organism>
<gene>
    <name evidence="1" type="primary">rpsS</name>
    <name type="ordered locus">HPG27_1264</name>
</gene>
<reference key="1">
    <citation type="journal article" date="2009" name="J. Bacteriol.">
        <title>The complete genome sequence of Helicobacter pylori strain G27.</title>
        <authorList>
            <person name="Baltrus D.A."/>
            <person name="Amieva M.R."/>
            <person name="Covacci A."/>
            <person name="Lowe T.M."/>
            <person name="Merrell D.S."/>
            <person name="Ottemann K.M."/>
            <person name="Stein M."/>
            <person name="Salama N.R."/>
            <person name="Guillemin K."/>
        </authorList>
    </citation>
    <scope>NUCLEOTIDE SEQUENCE [LARGE SCALE GENOMIC DNA]</scope>
    <source>
        <strain>G27</strain>
    </source>
</reference>
<proteinExistence type="inferred from homology"/>
<evidence type="ECO:0000255" key="1">
    <source>
        <dbReference type="HAMAP-Rule" id="MF_00531"/>
    </source>
</evidence>
<evidence type="ECO:0000305" key="2"/>
<name>RS19_HELPG</name>
<accession>B5Z8W3</accession>
<feature type="chain" id="PRO_1000127988" description="Small ribosomal subunit protein uS19">
    <location>
        <begin position="1"/>
        <end position="93"/>
    </location>
</feature>
<keyword id="KW-1185">Reference proteome</keyword>
<keyword id="KW-0687">Ribonucleoprotein</keyword>
<keyword id="KW-0689">Ribosomal protein</keyword>
<keyword id="KW-0694">RNA-binding</keyword>
<keyword id="KW-0699">rRNA-binding</keyword>
<comment type="function">
    <text evidence="1">Protein S19 forms a complex with S13 that binds strongly to the 16S ribosomal RNA.</text>
</comment>
<comment type="similarity">
    <text evidence="1">Belongs to the universal ribosomal protein uS19 family.</text>
</comment>